<dbReference type="EC" id="2.4.2.9" evidence="1"/>
<dbReference type="EMBL" id="CP001341">
    <property type="protein sequence ID" value="ACL38795.1"/>
    <property type="molecule type" value="Genomic_DNA"/>
</dbReference>
<dbReference type="RefSeq" id="WP_015936020.1">
    <property type="nucleotide sequence ID" value="NC_011886.1"/>
</dbReference>
<dbReference type="SMR" id="B8HCL2"/>
<dbReference type="STRING" id="452863.Achl_0800"/>
<dbReference type="KEGG" id="ach:Achl_0800"/>
<dbReference type="eggNOG" id="COG0035">
    <property type="taxonomic scope" value="Bacteria"/>
</dbReference>
<dbReference type="HOGENOM" id="CLU_067096_2_3_11"/>
<dbReference type="OrthoDB" id="9781675at2"/>
<dbReference type="UniPathway" id="UPA00574">
    <property type="reaction ID" value="UER00636"/>
</dbReference>
<dbReference type="Proteomes" id="UP000002505">
    <property type="component" value="Chromosome"/>
</dbReference>
<dbReference type="GO" id="GO:0005525">
    <property type="term" value="F:GTP binding"/>
    <property type="evidence" value="ECO:0007669"/>
    <property type="project" value="UniProtKB-KW"/>
</dbReference>
<dbReference type="GO" id="GO:0000287">
    <property type="term" value="F:magnesium ion binding"/>
    <property type="evidence" value="ECO:0007669"/>
    <property type="project" value="UniProtKB-UniRule"/>
</dbReference>
<dbReference type="GO" id="GO:0004845">
    <property type="term" value="F:uracil phosphoribosyltransferase activity"/>
    <property type="evidence" value="ECO:0007669"/>
    <property type="project" value="UniProtKB-UniRule"/>
</dbReference>
<dbReference type="GO" id="GO:0044206">
    <property type="term" value="P:UMP salvage"/>
    <property type="evidence" value="ECO:0007669"/>
    <property type="project" value="UniProtKB-UniRule"/>
</dbReference>
<dbReference type="GO" id="GO:0006223">
    <property type="term" value="P:uracil salvage"/>
    <property type="evidence" value="ECO:0007669"/>
    <property type="project" value="InterPro"/>
</dbReference>
<dbReference type="CDD" id="cd06223">
    <property type="entry name" value="PRTases_typeI"/>
    <property type="match status" value="1"/>
</dbReference>
<dbReference type="FunFam" id="3.40.50.2020:FF:000003">
    <property type="entry name" value="Uracil phosphoribosyltransferase"/>
    <property type="match status" value="1"/>
</dbReference>
<dbReference type="Gene3D" id="3.40.50.2020">
    <property type="match status" value="1"/>
</dbReference>
<dbReference type="HAMAP" id="MF_01218_B">
    <property type="entry name" value="Upp_B"/>
    <property type="match status" value="1"/>
</dbReference>
<dbReference type="InterPro" id="IPR000836">
    <property type="entry name" value="PRibTrfase_dom"/>
</dbReference>
<dbReference type="InterPro" id="IPR029057">
    <property type="entry name" value="PRTase-like"/>
</dbReference>
<dbReference type="InterPro" id="IPR034332">
    <property type="entry name" value="Upp_B"/>
</dbReference>
<dbReference type="InterPro" id="IPR050054">
    <property type="entry name" value="UPRTase/APRTase"/>
</dbReference>
<dbReference type="InterPro" id="IPR005765">
    <property type="entry name" value="Ura_phspho_trans"/>
</dbReference>
<dbReference type="NCBIfam" id="NF001097">
    <property type="entry name" value="PRK00129.1"/>
    <property type="match status" value="1"/>
</dbReference>
<dbReference type="NCBIfam" id="TIGR01091">
    <property type="entry name" value="upp"/>
    <property type="match status" value="1"/>
</dbReference>
<dbReference type="PANTHER" id="PTHR32315">
    <property type="entry name" value="ADENINE PHOSPHORIBOSYLTRANSFERASE"/>
    <property type="match status" value="1"/>
</dbReference>
<dbReference type="PANTHER" id="PTHR32315:SF4">
    <property type="entry name" value="URACIL PHOSPHORIBOSYLTRANSFERASE, CHLOROPLASTIC"/>
    <property type="match status" value="1"/>
</dbReference>
<dbReference type="Pfam" id="PF14681">
    <property type="entry name" value="UPRTase"/>
    <property type="match status" value="1"/>
</dbReference>
<dbReference type="SUPFAM" id="SSF53271">
    <property type="entry name" value="PRTase-like"/>
    <property type="match status" value="1"/>
</dbReference>
<feature type="chain" id="PRO_1000164806" description="Uracil phosphoribosyltransferase">
    <location>
        <begin position="1"/>
        <end position="211"/>
    </location>
</feature>
<feature type="binding site" evidence="1">
    <location>
        <position position="78"/>
    </location>
    <ligand>
        <name>5-phospho-alpha-D-ribose 1-diphosphate</name>
        <dbReference type="ChEBI" id="CHEBI:58017"/>
    </ligand>
</feature>
<feature type="binding site" evidence="1">
    <location>
        <position position="103"/>
    </location>
    <ligand>
        <name>5-phospho-alpha-D-ribose 1-diphosphate</name>
        <dbReference type="ChEBI" id="CHEBI:58017"/>
    </ligand>
</feature>
<feature type="binding site" evidence="1">
    <location>
        <begin position="130"/>
        <end position="138"/>
    </location>
    <ligand>
        <name>5-phospho-alpha-D-ribose 1-diphosphate</name>
        <dbReference type="ChEBI" id="CHEBI:58017"/>
    </ligand>
</feature>
<feature type="binding site" evidence="1">
    <location>
        <position position="195"/>
    </location>
    <ligand>
        <name>uracil</name>
        <dbReference type="ChEBI" id="CHEBI:17568"/>
    </ligand>
</feature>
<feature type="binding site" evidence="1">
    <location>
        <begin position="200"/>
        <end position="202"/>
    </location>
    <ligand>
        <name>uracil</name>
        <dbReference type="ChEBI" id="CHEBI:17568"/>
    </ligand>
</feature>
<feature type="binding site" evidence="1">
    <location>
        <position position="201"/>
    </location>
    <ligand>
        <name>5-phospho-alpha-D-ribose 1-diphosphate</name>
        <dbReference type="ChEBI" id="CHEBI:58017"/>
    </ligand>
</feature>
<reference key="1">
    <citation type="submission" date="2009-01" db="EMBL/GenBank/DDBJ databases">
        <title>Complete sequence of chromosome of Arthrobacter chlorophenolicus A6.</title>
        <authorList>
            <consortium name="US DOE Joint Genome Institute"/>
            <person name="Lucas S."/>
            <person name="Copeland A."/>
            <person name="Lapidus A."/>
            <person name="Glavina del Rio T."/>
            <person name="Tice H."/>
            <person name="Bruce D."/>
            <person name="Goodwin L."/>
            <person name="Pitluck S."/>
            <person name="Goltsman E."/>
            <person name="Clum A."/>
            <person name="Larimer F."/>
            <person name="Land M."/>
            <person name="Hauser L."/>
            <person name="Kyrpides N."/>
            <person name="Mikhailova N."/>
            <person name="Jansson J."/>
            <person name="Richardson P."/>
        </authorList>
    </citation>
    <scope>NUCLEOTIDE SEQUENCE [LARGE SCALE GENOMIC DNA]</scope>
    <source>
        <strain>ATCC 700700 / DSM 12829 / CIP 107037 / JCM 12360 / KCTC 9906 / NCIMB 13794 / A6</strain>
    </source>
</reference>
<organism>
    <name type="scientific">Pseudarthrobacter chlorophenolicus (strain ATCC 700700 / DSM 12829 / CIP 107037 / JCM 12360 / KCTC 9906 / NCIMB 13794 / A6)</name>
    <name type="common">Arthrobacter chlorophenolicus</name>
    <dbReference type="NCBI Taxonomy" id="452863"/>
    <lineage>
        <taxon>Bacteria</taxon>
        <taxon>Bacillati</taxon>
        <taxon>Actinomycetota</taxon>
        <taxon>Actinomycetes</taxon>
        <taxon>Micrococcales</taxon>
        <taxon>Micrococcaceae</taxon>
        <taxon>Pseudarthrobacter</taxon>
    </lineage>
</organism>
<protein>
    <recommendedName>
        <fullName evidence="1">Uracil phosphoribosyltransferase</fullName>
        <ecNumber evidence="1">2.4.2.9</ecNumber>
    </recommendedName>
    <alternativeName>
        <fullName evidence="1">UMP pyrophosphorylase</fullName>
    </alternativeName>
    <alternativeName>
        <fullName evidence="1">UPRTase</fullName>
    </alternativeName>
</protein>
<accession>B8HCL2</accession>
<comment type="function">
    <text evidence="1">Catalyzes the conversion of uracil and 5-phospho-alpha-D-ribose 1-diphosphate (PRPP) to UMP and diphosphate.</text>
</comment>
<comment type="catalytic activity">
    <reaction evidence="1">
        <text>UMP + diphosphate = 5-phospho-alpha-D-ribose 1-diphosphate + uracil</text>
        <dbReference type="Rhea" id="RHEA:13017"/>
        <dbReference type="ChEBI" id="CHEBI:17568"/>
        <dbReference type="ChEBI" id="CHEBI:33019"/>
        <dbReference type="ChEBI" id="CHEBI:57865"/>
        <dbReference type="ChEBI" id="CHEBI:58017"/>
        <dbReference type="EC" id="2.4.2.9"/>
    </reaction>
</comment>
<comment type="cofactor">
    <cofactor evidence="1">
        <name>Mg(2+)</name>
        <dbReference type="ChEBI" id="CHEBI:18420"/>
    </cofactor>
    <text evidence="1">Binds 1 Mg(2+) ion per subunit. The magnesium is bound as Mg-PRPP.</text>
</comment>
<comment type="activity regulation">
    <text evidence="1">Allosterically activated by GTP.</text>
</comment>
<comment type="pathway">
    <text evidence="1">Pyrimidine metabolism; UMP biosynthesis via salvage pathway; UMP from uracil: step 1/1.</text>
</comment>
<comment type="similarity">
    <text evidence="1">Belongs to the UPRTase family.</text>
</comment>
<proteinExistence type="inferred from homology"/>
<name>UPP_PSECP</name>
<evidence type="ECO:0000255" key="1">
    <source>
        <dbReference type="HAMAP-Rule" id="MF_01218"/>
    </source>
</evidence>
<gene>
    <name evidence="1" type="primary">upp</name>
    <name type="ordered locus">Achl_0800</name>
</gene>
<sequence>MRTLVVDHPLVAHKLTVLRDKNTPSPVFRQLTEELVTLLAYEATREVRTEPVTIQTPVSTTVGTAFTKPTPLVVPILRAGLGMLEGMTKLVPTAEVGFLGMARDEETLDIITYAERLPDDLTGRQVFVLDPMLATGGTLREAIKFLFKRGASDVTCICLLAAPEGLAKLEEELGEANVHIVLASIDEKLNEKSYIVPGLGDAGDRLYGIAG</sequence>
<keyword id="KW-0021">Allosteric enzyme</keyword>
<keyword id="KW-0328">Glycosyltransferase</keyword>
<keyword id="KW-0342">GTP-binding</keyword>
<keyword id="KW-0460">Magnesium</keyword>
<keyword id="KW-0547">Nucleotide-binding</keyword>
<keyword id="KW-0808">Transferase</keyword>